<gene>
    <name type="primary">MFL1</name>
    <name type="ordered locus">At5g42130</name>
    <name type="ORF">MJC20.24</name>
</gene>
<accession>Q9FHX2</accession>
<feature type="transit peptide" description="Chloroplast" evidence="1">
    <location>
        <begin position="1"/>
        <end position="92"/>
    </location>
</feature>
<feature type="chain" id="PRO_0000413208" description="Protein MITOFERRINLIKE 1, chloroplastic">
    <location>
        <begin position="93"/>
        <end position="412"/>
    </location>
</feature>
<feature type="transmembrane region" description="Helical; Name=1" evidence="1">
    <location>
        <begin position="115"/>
        <end position="135"/>
    </location>
</feature>
<feature type="transmembrane region" description="Helical; Name=2" evidence="1">
    <location>
        <begin position="167"/>
        <end position="187"/>
    </location>
</feature>
<feature type="transmembrane region" description="Helical; Name=3" evidence="1">
    <location>
        <begin position="208"/>
        <end position="228"/>
    </location>
</feature>
<feature type="transmembrane region" description="Helical; Name=4" evidence="1">
    <location>
        <begin position="262"/>
        <end position="282"/>
    </location>
</feature>
<feature type="transmembrane region" description="Helical; Name=5" evidence="1">
    <location>
        <begin position="303"/>
        <end position="323"/>
    </location>
</feature>
<feature type="transmembrane region" description="Helical; Name=6" evidence="1">
    <location>
        <begin position="365"/>
        <end position="385"/>
    </location>
</feature>
<feature type="repeat" description="Solcar 1">
    <location>
        <begin position="112"/>
        <end position="198"/>
    </location>
</feature>
<feature type="repeat" description="Solcar 2">
    <location>
        <begin position="206"/>
        <end position="288"/>
    </location>
</feature>
<feature type="repeat" description="Solcar 3">
    <location>
        <begin position="298"/>
        <end position="392"/>
    </location>
</feature>
<feature type="region of interest" description="Disordered" evidence="2">
    <location>
        <begin position="43"/>
        <end position="83"/>
    </location>
</feature>
<keyword id="KW-0150">Chloroplast</keyword>
<keyword id="KW-0472">Membrane</keyword>
<keyword id="KW-0934">Plastid</keyword>
<keyword id="KW-1001">Plastid inner membrane</keyword>
<keyword id="KW-1185">Reference proteome</keyword>
<keyword id="KW-0677">Repeat</keyword>
<keyword id="KW-0809">Transit peptide</keyword>
<keyword id="KW-0812">Transmembrane</keyword>
<keyword id="KW-1133">Transmembrane helix</keyword>
<keyword id="KW-0813">Transport</keyword>
<dbReference type="EMBL" id="AB017067">
    <property type="protein sequence ID" value="BAB08446.1"/>
    <property type="molecule type" value="Genomic_DNA"/>
</dbReference>
<dbReference type="EMBL" id="CP002688">
    <property type="protein sequence ID" value="AED94771.1"/>
    <property type="molecule type" value="Genomic_DNA"/>
</dbReference>
<dbReference type="RefSeq" id="NP_199028.1">
    <property type="nucleotide sequence ID" value="NM_123578.4"/>
</dbReference>
<dbReference type="SMR" id="Q9FHX2"/>
<dbReference type="FunCoup" id="Q9FHX2">
    <property type="interactions" value="443"/>
</dbReference>
<dbReference type="STRING" id="3702.Q9FHX2"/>
<dbReference type="GlyGen" id="Q9FHX2">
    <property type="glycosylation" value="1 site"/>
</dbReference>
<dbReference type="PaxDb" id="3702-AT5G42130.1"/>
<dbReference type="ProteomicsDB" id="250631"/>
<dbReference type="EnsemblPlants" id="AT5G42130.1">
    <property type="protein sequence ID" value="AT5G42130.1"/>
    <property type="gene ID" value="AT5G42130"/>
</dbReference>
<dbReference type="GeneID" id="834218"/>
<dbReference type="Gramene" id="AT5G42130.1">
    <property type="protein sequence ID" value="AT5G42130.1"/>
    <property type="gene ID" value="AT5G42130"/>
</dbReference>
<dbReference type="KEGG" id="ath:AT5G42130"/>
<dbReference type="Araport" id="AT5G42130"/>
<dbReference type="TAIR" id="AT5G42130">
    <property type="gene designation" value="MFL1"/>
</dbReference>
<dbReference type="eggNOG" id="KOG0768">
    <property type="taxonomic scope" value="Eukaryota"/>
</dbReference>
<dbReference type="HOGENOM" id="CLU_015166_3_7_1"/>
<dbReference type="InParanoid" id="Q9FHX2"/>
<dbReference type="OMA" id="LMTQVHS"/>
<dbReference type="PhylomeDB" id="Q9FHX2"/>
<dbReference type="PRO" id="PR:Q9FHX2"/>
<dbReference type="Proteomes" id="UP000006548">
    <property type="component" value="Chromosome 5"/>
</dbReference>
<dbReference type="ExpressionAtlas" id="Q9FHX2">
    <property type="expression patterns" value="baseline and differential"/>
</dbReference>
<dbReference type="GO" id="GO:0009507">
    <property type="term" value="C:chloroplast"/>
    <property type="evidence" value="ECO:0007005"/>
    <property type="project" value="TAIR"/>
</dbReference>
<dbReference type="GO" id="GO:0009941">
    <property type="term" value="C:chloroplast envelope"/>
    <property type="evidence" value="ECO:0007005"/>
    <property type="project" value="TAIR"/>
</dbReference>
<dbReference type="GO" id="GO:0009706">
    <property type="term" value="C:chloroplast inner membrane"/>
    <property type="evidence" value="ECO:0007669"/>
    <property type="project" value="UniProtKB-SubCell"/>
</dbReference>
<dbReference type="GO" id="GO:0009536">
    <property type="term" value="C:plastid"/>
    <property type="evidence" value="ECO:0007005"/>
    <property type="project" value="TAIR"/>
</dbReference>
<dbReference type="GO" id="GO:0006826">
    <property type="term" value="P:iron ion transport"/>
    <property type="evidence" value="ECO:0000315"/>
    <property type="project" value="TAIR"/>
</dbReference>
<dbReference type="GO" id="GO:0010039">
    <property type="term" value="P:response to iron ion"/>
    <property type="evidence" value="ECO:0000270"/>
    <property type="project" value="TAIR"/>
</dbReference>
<dbReference type="FunFam" id="1.50.40.10:FF:000097">
    <property type="entry name" value="Protein MITOFERRINLIKE 1, chloroplastic"/>
    <property type="match status" value="1"/>
</dbReference>
<dbReference type="FunFam" id="1.50.40.10:FF:000089">
    <property type="entry name" value="protein MITOFERRINLIKE 1, chloroplastic"/>
    <property type="match status" value="1"/>
</dbReference>
<dbReference type="Gene3D" id="1.50.40.10">
    <property type="entry name" value="Mitochondrial carrier domain"/>
    <property type="match status" value="2"/>
</dbReference>
<dbReference type="InterPro" id="IPR018108">
    <property type="entry name" value="Mitochondrial_sb/sol_carrier"/>
</dbReference>
<dbReference type="InterPro" id="IPR023395">
    <property type="entry name" value="Mt_carrier_dom_sf"/>
</dbReference>
<dbReference type="PANTHER" id="PTHR45667">
    <property type="entry name" value="S-ADENOSYLMETHIONINE MITOCHONDRIAL CARRIER PROTEIN"/>
    <property type="match status" value="1"/>
</dbReference>
<dbReference type="Pfam" id="PF00153">
    <property type="entry name" value="Mito_carr"/>
    <property type="match status" value="3"/>
</dbReference>
<dbReference type="SUPFAM" id="SSF103506">
    <property type="entry name" value="Mitochondrial carrier"/>
    <property type="match status" value="1"/>
</dbReference>
<dbReference type="PROSITE" id="PS50920">
    <property type="entry name" value="SOLCAR"/>
    <property type="match status" value="3"/>
</dbReference>
<reference key="1">
    <citation type="journal article" date="1999" name="DNA Res.">
        <title>Structural analysis of Arabidopsis thaliana chromosome 5. IX. Sequence features of the regions of 1,011,550 bp covered by seventeen P1 and TAC clones.</title>
        <authorList>
            <person name="Kaneko T."/>
            <person name="Katoh T."/>
            <person name="Sato S."/>
            <person name="Nakamura Y."/>
            <person name="Asamizu E."/>
            <person name="Kotani H."/>
            <person name="Miyajima N."/>
            <person name="Tabata S."/>
        </authorList>
    </citation>
    <scope>NUCLEOTIDE SEQUENCE [LARGE SCALE GENOMIC DNA]</scope>
    <source>
        <strain>cv. Columbia</strain>
    </source>
</reference>
<reference key="2">
    <citation type="journal article" date="2017" name="Plant J.">
        <title>Araport11: a complete reannotation of the Arabidopsis thaliana reference genome.</title>
        <authorList>
            <person name="Cheng C.Y."/>
            <person name="Krishnakumar V."/>
            <person name="Chan A.P."/>
            <person name="Thibaud-Nissen F."/>
            <person name="Schobel S."/>
            <person name="Town C.D."/>
        </authorList>
    </citation>
    <scope>GENOME REANNOTATION</scope>
    <source>
        <strain>cv. Columbia</strain>
    </source>
</reference>
<reference key="3">
    <citation type="journal article" date="2011" name="Plant Physiol. Biochem.">
        <title>Identification of an Arabidopsis mitoferrinlike carrier protein involved in Fe metabolism.</title>
        <authorList>
            <person name="Tarantino D."/>
            <person name="Morandini P."/>
            <person name="Ramirez L."/>
            <person name="Soave C."/>
            <person name="Murgia I."/>
        </authorList>
    </citation>
    <scope>FUNCTION</scope>
    <scope>INDUCTION BY IRON</scope>
    <scope>SUBCELLULAR LOCATION</scope>
    <scope>TISSUE SPECIFICITY</scope>
    <scope>DISRUPTION PHENOTYPE</scope>
</reference>
<sequence length="412" mass="44361">MEARLSETLGLPSPNLNHCHFPNEFNSLFTHFSDLTSVQSPIVRNPKLKTKSSQKPPKFSANFRRSDPPFASTSISDPTHEKPGPEFLKWIKPASRSSPRIQTLIKQLSVWERAIIGAGAGGLAGAFTYVTLLPLDAIKTKLQTKGASQVYSNTFDAIVKTFQAKGILGFYSGVSAVIVGSTFSSAVYFGTCEFGKSLLSKFPDFPTVLIPPTAGAMGNIISSAIMVPKELITQRMQAGASGRSYQVLLKILEKDGILGLYAGYSATLLRNLPAGVLSYSSFEYLKAAVLEKTKQSHLEPLQSVCCGALAGAISASITTPLDVVKTRLMTQIHVEAVDKLGGAMYTGVAGTVKQILTEEGWVGFTRGMGPRVVHSACFSAIGYFAFETARLTILNEYLKRKEESEANVAADS</sequence>
<evidence type="ECO:0000255" key="1"/>
<evidence type="ECO:0000256" key="2">
    <source>
        <dbReference type="SAM" id="MobiDB-lite"/>
    </source>
</evidence>
<evidence type="ECO:0000269" key="3">
    <source>
    </source>
</evidence>
<evidence type="ECO:0000305" key="4"/>
<evidence type="ECO:0000305" key="5">
    <source>
    </source>
</evidence>
<comment type="function">
    <text evidence="3">Probably involved in iron transport into chloroplasts.</text>
</comment>
<comment type="subcellular location">
    <subcellularLocation>
        <location evidence="5">Plastid</location>
        <location evidence="5">Chloroplast inner membrane</location>
        <topology evidence="5">Multi-pass membrane protein</topology>
    </subcellularLocation>
</comment>
<comment type="tissue specificity">
    <text evidence="3">Expressed in leaves, developing flowers and siliques.</text>
</comment>
<comment type="induction">
    <text evidence="3">Up-regulated by iron excess.</text>
</comment>
<comment type="disruption phenotype">
    <text evidence="3">Reduced vegetative growth and reduced expression of ferritin.</text>
</comment>
<comment type="similarity">
    <text evidence="4">Belongs to the mitochondrial carrier (TC 2.A.29) family.</text>
</comment>
<organism>
    <name type="scientific">Arabidopsis thaliana</name>
    <name type="common">Mouse-ear cress</name>
    <dbReference type="NCBI Taxonomy" id="3702"/>
    <lineage>
        <taxon>Eukaryota</taxon>
        <taxon>Viridiplantae</taxon>
        <taxon>Streptophyta</taxon>
        <taxon>Embryophyta</taxon>
        <taxon>Tracheophyta</taxon>
        <taxon>Spermatophyta</taxon>
        <taxon>Magnoliopsida</taxon>
        <taxon>eudicotyledons</taxon>
        <taxon>Gunneridae</taxon>
        <taxon>Pentapetalae</taxon>
        <taxon>rosids</taxon>
        <taxon>malvids</taxon>
        <taxon>Brassicales</taxon>
        <taxon>Brassicaceae</taxon>
        <taxon>Camelineae</taxon>
        <taxon>Arabidopsis</taxon>
    </lineage>
</organism>
<protein>
    <recommendedName>
        <fullName>Protein MITOFERRINLIKE 1, chloroplastic</fullName>
        <shortName>AtMFL1</shortName>
    </recommendedName>
</protein>
<name>MFL1_ARATH</name>
<proteinExistence type="evidence at transcript level"/>